<dbReference type="EC" id="3.6.4.-" evidence="1"/>
<dbReference type="EMBL" id="D84298">
    <property type="protein sequence ID" value="BAA76366.1"/>
    <property type="molecule type" value="Genomic_DNA"/>
</dbReference>
<dbReference type="EMBL" id="AE000513">
    <property type="protein sequence ID" value="AAF10176.1"/>
    <property type="molecule type" value="Genomic_DNA"/>
</dbReference>
<dbReference type="PIR" id="D75498">
    <property type="entry name" value="D75498"/>
</dbReference>
<dbReference type="RefSeq" id="NP_294319.1">
    <property type="nucleotide sequence ID" value="NC_001263.1"/>
</dbReference>
<dbReference type="RefSeq" id="WP_010887241.1">
    <property type="nucleotide sequence ID" value="NC_001263.1"/>
</dbReference>
<dbReference type="SMR" id="Q9X719"/>
<dbReference type="FunCoup" id="Q9X719">
    <property type="interactions" value="329"/>
</dbReference>
<dbReference type="STRING" id="243230.DR_0596"/>
<dbReference type="PaxDb" id="243230-DR_0596"/>
<dbReference type="EnsemblBacteria" id="AAF10176">
    <property type="protein sequence ID" value="AAF10176"/>
    <property type="gene ID" value="DR_0596"/>
</dbReference>
<dbReference type="GeneID" id="69516840"/>
<dbReference type="KEGG" id="dra:DR_0596"/>
<dbReference type="PATRIC" id="fig|243230.17.peg.774"/>
<dbReference type="eggNOG" id="COG2255">
    <property type="taxonomic scope" value="Bacteria"/>
</dbReference>
<dbReference type="HOGENOM" id="CLU_055599_1_0_0"/>
<dbReference type="InParanoid" id="Q9X719"/>
<dbReference type="OrthoDB" id="9804478at2"/>
<dbReference type="Proteomes" id="UP000002524">
    <property type="component" value="Chromosome 1"/>
</dbReference>
<dbReference type="GO" id="GO:0005737">
    <property type="term" value="C:cytoplasm"/>
    <property type="evidence" value="ECO:0007669"/>
    <property type="project" value="UniProtKB-SubCell"/>
</dbReference>
<dbReference type="GO" id="GO:0048476">
    <property type="term" value="C:Holliday junction resolvase complex"/>
    <property type="evidence" value="ECO:0007669"/>
    <property type="project" value="UniProtKB-UniRule"/>
</dbReference>
<dbReference type="GO" id="GO:0005524">
    <property type="term" value="F:ATP binding"/>
    <property type="evidence" value="ECO:0007669"/>
    <property type="project" value="UniProtKB-UniRule"/>
</dbReference>
<dbReference type="GO" id="GO:0016887">
    <property type="term" value="F:ATP hydrolysis activity"/>
    <property type="evidence" value="ECO:0007669"/>
    <property type="project" value="InterPro"/>
</dbReference>
<dbReference type="GO" id="GO:0000400">
    <property type="term" value="F:four-way junction DNA binding"/>
    <property type="evidence" value="ECO:0007669"/>
    <property type="project" value="UniProtKB-UniRule"/>
</dbReference>
<dbReference type="GO" id="GO:0009378">
    <property type="term" value="F:four-way junction helicase activity"/>
    <property type="evidence" value="ECO:0007669"/>
    <property type="project" value="InterPro"/>
</dbReference>
<dbReference type="GO" id="GO:0006310">
    <property type="term" value="P:DNA recombination"/>
    <property type="evidence" value="ECO:0007669"/>
    <property type="project" value="UniProtKB-UniRule"/>
</dbReference>
<dbReference type="GO" id="GO:0006281">
    <property type="term" value="P:DNA repair"/>
    <property type="evidence" value="ECO:0007669"/>
    <property type="project" value="UniProtKB-UniRule"/>
</dbReference>
<dbReference type="CDD" id="cd00009">
    <property type="entry name" value="AAA"/>
    <property type="match status" value="1"/>
</dbReference>
<dbReference type="Gene3D" id="1.10.8.60">
    <property type="match status" value="1"/>
</dbReference>
<dbReference type="Gene3D" id="3.40.50.300">
    <property type="entry name" value="P-loop containing nucleotide triphosphate hydrolases"/>
    <property type="match status" value="1"/>
</dbReference>
<dbReference type="Gene3D" id="1.10.10.10">
    <property type="entry name" value="Winged helix-like DNA-binding domain superfamily/Winged helix DNA-binding domain"/>
    <property type="match status" value="1"/>
</dbReference>
<dbReference type="HAMAP" id="MF_00016">
    <property type="entry name" value="DNA_HJ_migration_RuvB"/>
    <property type="match status" value="1"/>
</dbReference>
<dbReference type="InterPro" id="IPR003593">
    <property type="entry name" value="AAA+_ATPase"/>
</dbReference>
<dbReference type="InterPro" id="IPR041445">
    <property type="entry name" value="AAA_lid_4"/>
</dbReference>
<dbReference type="InterPro" id="IPR004605">
    <property type="entry name" value="DNA_helicase_Holl-junc_RuvB"/>
</dbReference>
<dbReference type="InterPro" id="IPR027417">
    <property type="entry name" value="P-loop_NTPase"/>
</dbReference>
<dbReference type="InterPro" id="IPR008824">
    <property type="entry name" value="RuvB-like_N"/>
</dbReference>
<dbReference type="InterPro" id="IPR008823">
    <property type="entry name" value="RuvB_C"/>
</dbReference>
<dbReference type="InterPro" id="IPR036388">
    <property type="entry name" value="WH-like_DNA-bd_sf"/>
</dbReference>
<dbReference type="InterPro" id="IPR036390">
    <property type="entry name" value="WH_DNA-bd_sf"/>
</dbReference>
<dbReference type="NCBIfam" id="NF000868">
    <property type="entry name" value="PRK00080.1"/>
    <property type="match status" value="1"/>
</dbReference>
<dbReference type="NCBIfam" id="TIGR00635">
    <property type="entry name" value="ruvB"/>
    <property type="match status" value="1"/>
</dbReference>
<dbReference type="PANTHER" id="PTHR42848">
    <property type="match status" value="1"/>
</dbReference>
<dbReference type="PANTHER" id="PTHR42848:SF1">
    <property type="entry name" value="HOLLIDAY JUNCTION BRANCH MIGRATION COMPLEX SUBUNIT RUVB"/>
    <property type="match status" value="1"/>
</dbReference>
<dbReference type="Pfam" id="PF17864">
    <property type="entry name" value="AAA_lid_4"/>
    <property type="match status" value="1"/>
</dbReference>
<dbReference type="Pfam" id="PF05491">
    <property type="entry name" value="RuvB_C"/>
    <property type="match status" value="1"/>
</dbReference>
<dbReference type="Pfam" id="PF05496">
    <property type="entry name" value="RuvB_N"/>
    <property type="match status" value="1"/>
</dbReference>
<dbReference type="SMART" id="SM00382">
    <property type="entry name" value="AAA"/>
    <property type="match status" value="1"/>
</dbReference>
<dbReference type="SUPFAM" id="SSF52540">
    <property type="entry name" value="P-loop containing nucleoside triphosphate hydrolases"/>
    <property type="match status" value="1"/>
</dbReference>
<dbReference type="SUPFAM" id="SSF46785">
    <property type="entry name" value="Winged helix' DNA-binding domain"/>
    <property type="match status" value="1"/>
</dbReference>
<gene>
    <name evidence="1" type="primary">ruvB</name>
    <name type="ordered locus">DR_0596</name>
</gene>
<keyword id="KW-0067">ATP-binding</keyword>
<keyword id="KW-0963">Cytoplasm</keyword>
<keyword id="KW-0227">DNA damage</keyword>
<keyword id="KW-0233">DNA recombination</keyword>
<keyword id="KW-0234">DNA repair</keyword>
<keyword id="KW-0238">DNA-binding</keyword>
<keyword id="KW-0378">Hydrolase</keyword>
<keyword id="KW-0547">Nucleotide-binding</keyword>
<keyword id="KW-1185">Reference proteome</keyword>
<sequence length="333" mass="36325">MTAPENLDAALRPKTLTEYVGQEKLKDKLGVYLQAARGRREALDHTLLFGPPGLGKTTLAHIIAYELGVNIRVTSGPAIEKPGDLAAILTNSLEEGDVLFIDEIHRLGRVAEEHLYPAMEDFKLDIVLGQGPAARTIELPLPRFTLVGATTRPGLITAPMRSRFGIIEHLEYYTAEEIATNLLRDARLLGFGLDEEAGLEIGARSRGTMRIAKRLLRRVRDYADVAGETTIGLERAQSALDKLGLDSAGLDDRDKKYLETLIHRFAGGPVGVDTLATAISEDALTLEDVYEPYLIQLGFIKRTPRGRVATAHAYDHLGLPPGGIDDGNGIFLN</sequence>
<protein>
    <recommendedName>
        <fullName evidence="1">Holliday junction branch migration complex subunit RuvB</fullName>
        <ecNumber evidence="1">3.6.4.-</ecNumber>
    </recommendedName>
</protein>
<evidence type="ECO:0000255" key="1">
    <source>
        <dbReference type="HAMAP-Rule" id="MF_00016"/>
    </source>
</evidence>
<evidence type="ECO:0000305" key="2"/>
<evidence type="ECO:0000312" key="3">
    <source>
        <dbReference type="EMBL" id="AAF10176.1"/>
    </source>
</evidence>
<evidence type="ECO:0000312" key="4">
    <source>
        <dbReference type="EMBL" id="BAA76366.1"/>
    </source>
</evidence>
<comment type="function">
    <text evidence="1">The RuvA-RuvB-RuvC complex processes Holliday junction (HJ) DNA during genetic recombination and DNA repair, while the RuvA-RuvB complex plays an important role in the rescue of blocked DNA replication forks via replication fork reversal (RFR). RuvA specifically binds to HJ cruciform DNA, conferring on it an open structure. The RuvB hexamer acts as an ATP-dependent pump, pulling dsDNA into and through the RuvAB complex. RuvB forms 2 homohexamers on either side of HJ DNA bound by 1 or 2 RuvA tetramers; 4 subunits per hexamer contact DNA at a time. Coordinated motions by a converter formed by DNA-disengaged RuvB subunits stimulates ATP hydrolysis and nucleotide exchange. Immobilization of the converter enables RuvB to convert the ATP-contained energy into a lever motion, pulling 2 nucleotides of DNA out of the RuvA tetramer per ATP hydrolyzed, thus driving DNA branch migration. The RuvB motors rotate together with the DNA substrate, which together with the progressing nucleotide cycle form the mechanistic basis for DNA recombination by continuous HJ branch migration. Branch migration allows RuvC to scan DNA until it finds its consensus sequence, where it cleaves and resolves cruciform DNA.</text>
</comment>
<comment type="catalytic activity">
    <reaction evidence="1">
        <text>ATP + H2O = ADP + phosphate + H(+)</text>
        <dbReference type="Rhea" id="RHEA:13065"/>
        <dbReference type="ChEBI" id="CHEBI:15377"/>
        <dbReference type="ChEBI" id="CHEBI:15378"/>
        <dbReference type="ChEBI" id="CHEBI:30616"/>
        <dbReference type="ChEBI" id="CHEBI:43474"/>
        <dbReference type="ChEBI" id="CHEBI:456216"/>
    </reaction>
</comment>
<comment type="subunit">
    <text evidence="1">Homohexamer. Forms an RuvA(8)-RuvB(12)-Holliday junction (HJ) complex. HJ DNA is sandwiched between 2 RuvA tetramers; dsDNA enters through RuvA and exits via RuvB. An RuvB hexamer assembles on each DNA strand where it exits the tetramer. Each RuvB hexamer is contacted by two RuvA subunits (via domain III) on 2 adjacent RuvB subunits; this complex drives branch migration. In the full resolvosome a probable DNA-RuvA(4)-RuvB(12)-RuvC(2) complex forms which resolves the HJ.</text>
</comment>
<comment type="subcellular location">
    <subcellularLocation>
        <location evidence="1">Cytoplasm</location>
    </subcellularLocation>
</comment>
<comment type="domain">
    <text evidence="1">Has 3 domains, the large (RuvB-L) and small ATPase (RuvB-S) domains and the C-terminal head (RuvB-H) domain. The head domain binds DNA, while the ATPase domains jointly bind ATP, ADP or are empty depending on the state of the subunit in the translocation cycle. During a single DNA translocation step the structure of each domain remains the same, but their relative positions change.</text>
</comment>
<comment type="similarity">
    <text evidence="1">Belongs to the RuvB family.</text>
</comment>
<organism>
    <name type="scientific">Deinococcus radiodurans (strain ATCC 13939 / DSM 20539 / JCM 16871 / CCUG 27074 / LMG 4051 / NBRC 15346 / NCIMB 9279 / VKM B-1422 / R1)</name>
    <dbReference type="NCBI Taxonomy" id="243230"/>
    <lineage>
        <taxon>Bacteria</taxon>
        <taxon>Thermotogati</taxon>
        <taxon>Deinococcota</taxon>
        <taxon>Deinococci</taxon>
        <taxon>Deinococcales</taxon>
        <taxon>Deinococcaceae</taxon>
        <taxon>Deinococcus</taxon>
    </lineage>
</organism>
<feature type="chain" id="PRO_0000165526" description="Holliday junction branch migration complex subunit RuvB">
    <location>
        <begin position="1"/>
        <end position="333"/>
    </location>
</feature>
<feature type="region of interest" description="Large ATPase domain (RuvB-L)" evidence="1">
    <location>
        <begin position="1"/>
        <end position="173"/>
    </location>
</feature>
<feature type="region of interest" description="Small ATPAse domain (RuvB-S)" evidence="1">
    <location>
        <begin position="174"/>
        <end position="244"/>
    </location>
</feature>
<feature type="region of interest" description="Head domain (RuvB-H)" evidence="1">
    <location>
        <begin position="247"/>
        <end position="333"/>
    </location>
</feature>
<feature type="binding site" evidence="1">
    <location>
        <position position="11"/>
    </location>
    <ligand>
        <name>ATP</name>
        <dbReference type="ChEBI" id="CHEBI:30616"/>
    </ligand>
</feature>
<feature type="binding site" evidence="1">
    <location>
        <position position="12"/>
    </location>
    <ligand>
        <name>ATP</name>
        <dbReference type="ChEBI" id="CHEBI:30616"/>
    </ligand>
</feature>
<feature type="binding site" evidence="1">
    <location>
        <position position="53"/>
    </location>
    <ligand>
        <name>ATP</name>
        <dbReference type="ChEBI" id="CHEBI:30616"/>
    </ligand>
</feature>
<feature type="binding site" evidence="1">
    <location>
        <position position="56"/>
    </location>
    <ligand>
        <name>ATP</name>
        <dbReference type="ChEBI" id="CHEBI:30616"/>
    </ligand>
</feature>
<feature type="binding site" evidence="1">
    <location>
        <position position="57"/>
    </location>
    <ligand>
        <name>ATP</name>
        <dbReference type="ChEBI" id="CHEBI:30616"/>
    </ligand>
</feature>
<feature type="binding site" evidence="1">
    <location>
        <position position="57"/>
    </location>
    <ligand>
        <name>Mg(2+)</name>
        <dbReference type="ChEBI" id="CHEBI:18420"/>
    </ligand>
</feature>
<feature type="binding site" evidence="1">
    <location>
        <position position="58"/>
    </location>
    <ligand>
        <name>ATP</name>
        <dbReference type="ChEBI" id="CHEBI:30616"/>
    </ligand>
</feature>
<feature type="binding site" evidence="1">
    <location>
        <begin position="120"/>
        <end position="122"/>
    </location>
    <ligand>
        <name>ATP</name>
        <dbReference type="ChEBI" id="CHEBI:30616"/>
    </ligand>
</feature>
<feature type="binding site" evidence="1">
    <location>
        <position position="163"/>
    </location>
    <ligand>
        <name>ATP</name>
        <dbReference type="ChEBI" id="CHEBI:30616"/>
    </ligand>
</feature>
<feature type="binding site" evidence="1">
    <location>
        <position position="173"/>
    </location>
    <ligand>
        <name>ATP</name>
        <dbReference type="ChEBI" id="CHEBI:30616"/>
    </ligand>
</feature>
<feature type="binding site" evidence="1">
    <location>
        <position position="210"/>
    </location>
    <ligand>
        <name>ATP</name>
        <dbReference type="ChEBI" id="CHEBI:30616"/>
    </ligand>
</feature>
<feature type="binding site" evidence="1">
    <location>
        <position position="302"/>
    </location>
    <ligand>
        <name>DNA</name>
        <dbReference type="ChEBI" id="CHEBI:16991"/>
    </ligand>
</feature>
<feature type="binding site" evidence="1">
    <location>
        <position position="307"/>
    </location>
    <ligand>
        <name>DNA</name>
        <dbReference type="ChEBI" id="CHEBI:16991"/>
    </ligand>
</feature>
<feature type="sequence conflict" description="In Ref. 1; BAA76366." evidence="2" ref="1">
    <location>
        <position position="87"/>
    </location>
</feature>
<feature type="sequence conflict" description="In Ref. 1; BAA76366." evidence="2" ref="1">
    <original>SR</original>
    <variation>RA</variation>
    <location>
        <begin position="162"/>
        <end position="163"/>
    </location>
</feature>
<feature type="sequence conflict" description="In Ref. 1; BAA76366." evidence="2" ref="1">
    <original>RLLRRVRDYADVAGETTIGLER</original>
    <variation>ACCGACATTPTWRAKPPSAWN</variation>
    <location>
        <begin position="214"/>
        <end position="235"/>
    </location>
</feature>
<feature type="sequence conflict" description="In Ref. 1; BAA76366." evidence="2" ref="1">
    <original>DDRDKKYLETLIHRFA</original>
    <variation>GTTRQEVPRNPDSPLC</variation>
    <location>
        <begin position="251"/>
        <end position="266"/>
    </location>
</feature>
<feature type="sequence conflict" description="In Ref. 1; BAA76366." evidence="2" ref="1">
    <original>TPRGRVATAHAYDHLGLPPGGIDDGNGIFLN</original>
    <variation>STWPRGDGTRL</variation>
    <location>
        <begin position="303"/>
        <end position="333"/>
    </location>
</feature>
<accession>Q9X719</accession>
<proteinExistence type="inferred from homology"/>
<reference evidence="4" key="1">
    <citation type="journal article" date="1997" name="Mutat. Res.">
        <title>Mutation of D. radiodurans in a gene homologous to ruvB of E. coli.</title>
        <authorList>
            <person name="Kitayama S."/>
            <person name="Kohoroku M."/>
            <person name="Takagi A."/>
            <person name="Itoh H."/>
        </authorList>
    </citation>
    <scope>NUCLEOTIDE SEQUENCE [GENOMIC DNA]</scope>
    <source>
        <strain>ATCC 13939 / DSM 20539 / JCM 16871 / CCUG 27074 / LMG 4051 / NBRC 15346 / NCIMB 9279 / VKM B-1422 / R1</strain>
    </source>
</reference>
<reference evidence="3" key="2">
    <citation type="journal article" date="1999" name="Science">
        <title>Genome sequence of the radioresistant bacterium Deinococcus radiodurans R1.</title>
        <authorList>
            <person name="White O."/>
            <person name="Eisen J.A."/>
            <person name="Heidelberg J.F."/>
            <person name="Hickey E.K."/>
            <person name="Peterson J.D."/>
            <person name="Dodson R.J."/>
            <person name="Haft D.H."/>
            <person name="Gwinn M.L."/>
            <person name="Nelson W.C."/>
            <person name="Richardson D.L."/>
            <person name="Moffat K.S."/>
            <person name="Qin H."/>
            <person name="Jiang L."/>
            <person name="Pamphile W."/>
            <person name="Crosby M."/>
            <person name="Shen M."/>
            <person name="Vamathevan J.J."/>
            <person name="Lam P."/>
            <person name="McDonald L.A."/>
            <person name="Utterback T.R."/>
            <person name="Zalewski C."/>
            <person name="Makarova K.S."/>
            <person name="Aravind L."/>
            <person name="Daly M.J."/>
            <person name="Minton K.W."/>
            <person name="Fleischmann R.D."/>
            <person name="Ketchum K.A."/>
            <person name="Nelson K.E."/>
            <person name="Salzberg S.L."/>
            <person name="Smith H.O."/>
            <person name="Venter J.C."/>
            <person name="Fraser C.M."/>
        </authorList>
    </citation>
    <scope>NUCLEOTIDE SEQUENCE [LARGE SCALE GENOMIC DNA]</scope>
    <source>
        <strain>ATCC 13939 / DSM 20539 / JCM 16871 / CCUG 27074 / LMG 4051 / NBRC 15346 / NCIMB 9279 / VKM B-1422 / R1</strain>
    </source>
</reference>
<name>RUVB_DEIRA</name>